<dbReference type="EC" id="1.1.1.262" evidence="1"/>
<dbReference type="EMBL" id="AL111168">
    <property type="protein sequence ID" value="CAL35354.1"/>
    <property type="molecule type" value="Genomic_DNA"/>
</dbReference>
<dbReference type="PIR" id="A81331">
    <property type="entry name" value="A81331"/>
</dbReference>
<dbReference type="RefSeq" id="WP_002853162.1">
    <property type="nucleotide sequence ID" value="NZ_SZUC01000001.1"/>
</dbReference>
<dbReference type="RefSeq" id="YP_002344630.1">
    <property type="nucleotide sequence ID" value="NC_002163.1"/>
</dbReference>
<dbReference type="PDB" id="3TSN">
    <property type="method" value="X-ray"/>
    <property type="resolution" value="2.63 A"/>
    <property type="chains" value="A/B/C/D=1-364"/>
</dbReference>
<dbReference type="PDBsum" id="3TSN"/>
<dbReference type="SMR" id="Q9PN58"/>
<dbReference type="IntAct" id="Q9PN58">
    <property type="interactions" value="2"/>
</dbReference>
<dbReference type="STRING" id="192222.Cj1239"/>
<dbReference type="PaxDb" id="192222-Cj1239"/>
<dbReference type="EnsemblBacteria" id="CAL35354">
    <property type="protein sequence ID" value="CAL35354"/>
    <property type="gene ID" value="Cj1239"/>
</dbReference>
<dbReference type="GeneID" id="905530"/>
<dbReference type="KEGG" id="cje:Cj1239"/>
<dbReference type="PATRIC" id="fig|192222.6.peg.1221"/>
<dbReference type="eggNOG" id="COG1995">
    <property type="taxonomic scope" value="Bacteria"/>
</dbReference>
<dbReference type="HOGENOM" id="CLU_040168_0_0_7"/>
<dbReference type="OrthoDB" id="9801783at2"/>
<dbReference type="UniPathway" id="UPA00244">
    <property type="reaction ID" value="UER00312"/>
</dbReference>
<dbReference type="EvolutionaryTrace" id="Q9PN58"/>
<dbReference type="Proteomes" id="UP000000799">
    <property type="component" value="Chromosome"/>
</dbReference>
<dbReference type="GO" id="GO:0005737">
    <property type="term" value="C:cytoplasm"/>
    <property type="evidence" value="ECO:0007669"/>
    <property type="project" value="UniProtKB-SubCell"/>
</dbReference>
<dbReference type="GO" id="GO:0050570">
    <property type="term" value="F:4-hydroxythreonine-4-phosphate dehydrogenase activity"/>
    <property type="evidence" value="ECO:0007669"/>
    <property type="project" value="UniProtKB-UniRule"/>
</dbReference>
<dbReference type="GO" id="GO:0050897">
    <property type="term" value="F:cobalt ion binding"/>
    <property type="evidence" value="ECO:0007669"/>
    <property type="project" value="UniProtKB-UniRule"/>
</dbReference>
<dbReference type="GO" id="GO:0000287">
    <property type="term" value="F:magnesium ion binding"/>
    <property type="evidence" value="ECO:0007669"/>
    <property type="project" value="UniProtKB-UniRule"/>
</dbReference>
<dbReference type="GO" id="GO:0051287">
    <property type="term" value="F:NAD binding"/>
    <property type="evidence" value="ECO:0007669"/>
    <property type="project" value="InterPro"/>
</dbReference>
<dbReference type="GO" id="GO:0008270">
    <property type="term" value="F:zinc ion binding"/>
    <property type="evidence" value="ECO:0007669"/>
    <property type="project" value="UniProtKB-UniRule"/>
</dbReference>
<dbReference type="GO" id="GO:0042823">
    <property type="term" value="P:pyridoxal phosphate biosynthetic process"/>
    <property type="evidence" value="ECO:0007669"/>
    <property type="project" value="UniProtKB-UniRule"/>
</dbReference>
<dbReference type="GO" id="GO:0008615">
    <property type="term" value="P:pyridoxine biosynthetic process"/>
    <property type="evidence" value="ECO:0007669"/>
    <property type="project" value="UniProtKB-UniRule"/>
</dbReference>
<dbReference type="Gene3D" id="3.40.718.10">
    <property type="entry name" value="Isopropylmalate Dehydrogenase"/>
    <property type="match status" value="1"/>
</dbReference>
<dbReference type="HAMAP" id="MF_02086">
    <property type="entry name" value="PdxA_Epsilonprot"/>
    <property type="match status" value="1"/>
</dbReference>
<dbReference type="InterPro" id="IPR037539">
    <property type="entry name" value="PdxA_epsilonprot"/>
</dbReference>
<dbReference type="InterPro" id="IPR005255">
    <property type="entry name" value="PdxA_fam"/>
</dbReference>
<dbReference type="NCBIfam" id="NF003040">
    <property type="entry name" value="PRK03946.1"/>
    <property type="match status" value="1"/>
</dbReference>
<dbReference type="PANTHER" id="PTHR30004">
    <property type="entry name" value="4-HYDROXYTHREONINE-4-PHOSPHATE DEHYDROGENASE"/>
    <property type="match status" value="1"/>
</dbReference>
<dbReference type="PANTHER" id="PTHR30004:SF6">
    <property type="entry name" value="D-THREONATE 4-PHOSPHATE DEHYDROGENASE"/>
    <property type="match status" value="1"/>
</dbReference>
<dbReference type="Pfam" id="PF04166">
    <property type="entry name" value="PdxA"/>
    <property type="match status" value="1"/>
</dbReference>
<dbReference type="SUPFAM" id="SSF53659">
    <property type="entry name" value="Isocitrate/Isopropylmalate dehydrogenase-like"/>
    <property type="match status" value="1"/>
</dbReference>
<sequence>MKKLAISIGDINSIGLEILVRSHEELSKICTPFYFIHESLLNKALKLLNLKLFNAKIVAFKDDKDYEFNFIKKENSLEIYSFCLPLGFKVDENFEIQAGEIDAKSGLYGFLSFKAASYFVYEKHAHALLTLPIHKKAWEDAGLKYKGHTDALRDFFKKNAIMMLGCKELFVGLFSEHIPLAKVSKKITFKNLSIFLKDFYKETHFKKMGLLGFNPHAGDYGVIGGEEEKIMEKAIAFVNAFLHSKKDEKFFKKALKDENLQKELLLNFKGKGVYLPYPLVADTAFTKTGLKNCNRLVAMYHDLALAPLKALYFDKSINVSLNLPIIRVSVDHGTAFDKAYKNAKINTKSYFEAAKFAINLHSKA</sequence>
<gene>
    <name evidence="1" type="primary">pdxA</name>
    <name type="ordered locus">Cj1239</name>
</gene>
<reference key="1">
    <citation type="journal article" date="2000" name="Nature">
        <title>The genome sequence of the food-borne pathogen Campylobacter jejuni reveals hypervariable sequences.</title>
        <authorList>
            <person name="Parkhill J."/>
            <person name="Wren B.W."/>
            <person name="Mungall K.L."/>
            <person name="Ketley J.M."/>
            <person name="Churcher C.M."/>
            <person name="Basham D."/>
            <person name="Chillingworth T."/>
            <person name="Davies R.M."/>
            <person name="Feltwell T."/>
            <person name="Holroyd S."/>
            <person name="Jagels K."/>
            <person name="Karlyshev A.V."/>
            <person name="Moule S."/>
            <person name="Pallen M.J."/>
            <person name="Penn C.W."/>
            <person name="Quail M.A."/>
            <person name="Rajandream M.A."/>
            <person name="Rutherford K.M."/>
            <person name="van Vliet A.H.M."/>
            <person name="Whitehead S."/>
            <person name="Barrell B.G."/>
        </authorList>
    </citation>
    <scope>NUCLEOTIDE SEQUENCE [LARGE SCALE GENOMIC DNA]</scope>
    <source>
        <strain>ATCC 700819 / NCTC 11168</strain>
    </source>
</reference>
<reference evidence="3" key="2">
    <citation type="submission" date="2011-09" db="PDB data bank">
        <title>4-hydroxythreonine-4-phosphate dehydrogenase from Campylobacter jejuni.</title>
        <authorList>
            <person name="Osipiuk J."/>
            <person name="Gu M."/>
            <person name="Kwon K."/>
            <person name="Anderson W.F."/>
            <person name="Joachimiak A."/>
        </authorList>
    </citation>
    <scope>X-RAY CRYSTALLOGRAPHY (2.63 ANGSTROMS) IN COMPLEX WITH NICKEL</scope>
</reference>
<name>PDXA_CAMJE</name>
<comment type="function">
    <text evidence="1">Catalyzes the NAD(P)-dependent oxidation of 4-(phosphooxy)-L-threonine (HTP) into 2-amino-3-oxo-4-(phosphooxy)butyric acid which spontaneously decarboxylates to form 3-amino-2-oxopropyl phosphate (AHAP).</text>
</comment>
<comment type="catalytic activity">
    <reaction evidence="1">
        <text>4-(phosphooxy)-L-threonine + NAD(+) = 3-amino-2-oxopropyl phosphate + CO2 + NADH</text>
        <dbReference type="Rhea" id="RHEA:32275"/>
        <dbReference type="ChEBI" id="CHEBI:16526"/>
        <dbReference type="ChEBI" id="CHEBI:57279"/>
        <dbReference type="ChEBI" id="CHEBI:57540"/>
        <dbReference type="ChEBI" id="CHEBI:57945"/>
        <dbReference type="ChEBI" id="CHEBI:58452"/>
        <dbReference type="EC" id="1.1.1.262"/>
    </reaction>
</comment>
<comment type="cofactor">
    <cofactor evidence="1">
        <name>Zn(2+)</name>
        <dbReference type="ChEBI" id="CHEBI:29105"/>
    </cofactor>
    <cofactor evidence="1">
        <name>Mg(2+)</name>
        <dbReference type="ChEBI" id="CHEBI:18420"/>
    </cofactor>
    <cofactor evidence="1">
        <name>Co(2+)</name>
        <dbReference type="ChEBI" id="CHEBI:48828"/>
    </cofactor>
</comment>
<comment type="pathway">
    <text evidence="1">Cofactor biosynthesis; pyridoxine 5'-phosphate biosynthesis; pyridoxine 5'-phosphate from D-erythrose 4-phosphate: step 4/5.</text>
</comment>
<comment type="subunit">
    <text evidence="1">Homodimer.</text>
</comment>
<comment type="subcellular location">
    <subcellularLocation>
        <location evidence="1">Cytoplasm</location>
    </subcellularLocation>
</comment>
<comment type="miscellaneous">
    <text evidence="1">The active site is located at the dimer interface.</text>
</comment>
<comment type="similarity">
    <text evidence="1">Belongs to the PdxA family.</text>
</comment>
<organism>
    <name type="scientific">Campylobacter jejuni subsp. jejuni serotype O:2 (strain ATCC 700819 / NCTC 11168)</name>
    <dbReference type="NCBI Taxonomy" id="192222"/>
    <lineage>
        <taxon>Bacteria</taxon>
        <taxon>Pseudomonadati</taxon>
        <taxon>Campylobacterota</taxon>
        <taxon>Epsilonproteobacteria</taxon>
        <taxon>Campylobacterales</taxon>
        <taxon>Campylobacteraceae</taxon>
        <taxon>Campylobacter</taxon>
    </lineage>
</organism>
<evidence type="ECO:0000255" key="1">
    <source>
        <dbReference type="HAMAP-Rule" id="MF_02086"/>
    </source>
</evidence>
<evidence type="ECO:0000305" key="2">
    <source ref="2"/>
</evidence>
<evidence type="ECO:0007744" key="3">
    <source>
        <dbReference type="PDB" id="3TSN"/>
    </source>
</evidence>
<evidence type="ECO:0007829" key="4">
    <source>
        <dbReference type="PDB" id="3TSN"/>
    </source>
</evidence>
<keyword id="KW-0002">3D-structure</keyword>
<keyword id="KW-0170">Cobalt</keyword>
<keyword id="KW-0963">Cytoplasm</keyword>
<keyword id="KW-0460">Magnesium</keyword>
<keyword id="KW-0479">Metal-binding</keyword>
<keyword id="KW-0520">NAD</keyword>
<keyword id="KW-0521">NADP</keyword>
<keyword id="KW-0560">Oxidoreductase</keyword>
<keyword id="KW-0664">Pyridoxine biosynthesis</keyword>
<keyword id="KW-1185">Reference proteome</keyword>
<keyword id="KW-0862">Zinc</keyword>
<proteinExistence type="evidence at protein level"/>
<protein>
    <recommendedName>
        <fullName evidence="1">4-hydroxythreonine-4-phosphate dehydrogenase</fullName>
        <ecNumber evidence="1">1.1.1.262</ecNumber>
    </recommendedName>
    <alternativeName>
        <fullName evidence="1">4-(phosphohydroxy)-L-threonine dehydrogenase</fullName>
    </alternativeName>
</protein>
<accession>Q9PN58</accession>
<accession>Q0P917</accession>
<feature type="chain" id="PRO_0000188802" description="4-hydroxythreonine-4-phosphate dehydrogenase">
    <location>
        <begin position="1"/>
        <end position="364"/>
    </location>
</feature>
<feature type="binding site" evidence="1">
    <location>
        <position position="148"/>
    </location>
    <ligand>
        <name>substrate</name>
    </ligand>
</feature>
<feature type="binding site" evidence="1">
    <location>
        <position position="149"/>
    </location>
    <ligand>
        <name>substrate</name>
    </ligand>
</feature>
<feature type="binding site" evidence="1 2">
    <location>
        <position position="177"/>
    </location>
    <ligand>
        <name>a divalent metal cation</name>
        <dbReference type="ChEBI" id="CHEBI:60240"/>
        <note>ligand shared between dimeric partners</note>
    </ligand>
</feature>
<feature type="binding site" evidence="1 2">
    <location>
        <position position="216"/>
    </location>
    <ligand>
        <name>a divalent metal cation</name>
        <dbReference type="ChEBI" id="CHEBI:60240"/>
        <note>ligand shared between dimeric partners</note>
    </ligand>
</feature>
<feature type="binding site" evidence="1 2">
    <location>
        <position position="301"/>
    </location>
    <ligand>
        <name>a divalent metal cation</name>
        <dbReference type="ChEBI" id="CHEBI:60240"/>
        <note>ligand shared between dimeric partners</note>
    </ligand>
</feature>
<feature type="binding site" evidence="1">
    <location>
        <position position="309"/>
    </location>
    <ligand>
        <name>substrate</name>
    </ligand>
</feature>
<feature type="binding site" evidence="1">
    <location>
        <position position="318"/>
    </location>
    <ligand>
        <name>substrate</name>
    </ligand>
</feature>
<feature type="binding site" evidence="1">
    <location>
        <position position="327"/>
    </location>
    <ligand>
        <name>substrate</name>
    </ligand>
</feature>
<feature type="strand" evidence="4">
    <location>
        <begin position="3"/>
        <end position="7"/>
    </location>
</feature>
<feature type="turn" evidence="4">
    <location>
        <begin position="11"/>
        <end position="14"/>
    </location>
</feature>
<feature type="helix" evidence="4">
    <location>
        <begin position="15"/>
        <end position="26"/>
    </location>
</feature>
<feature type="turn" evidence="4">
    <location>
        <begin position="27"/>
        <end position="29"/>
    </location>
</feature>
<feature type="strand" evidence="4">
    <location>
        <begin position="30"/>
        <end position="35"/>
    </location>
</feature>
<feature type="helix" evidence="4">
    <location>
        <begin position="38"/>
        <end position="48"/>
    </location>
</feature>
<feature type="strand" evidence="4">
    <location>
        <begin position="54"/>
        <end position="62"/>
    </location>
</feature>
<feature type="strand" evidence="4">
    <location>
        <begin position="67"/>
        <end position="73"/>
    </location>
</feature>
<feature type="strand" evidence="4">
    <location>
        <begin position="75"/>
        <end position="84"/>
    </location>
</feature>
<feature type="helix" evidence="4">
    <location>
        <begin position="103"/>
        <end position="121"/>
    </location>
</feature>
<feature type="strand" evidence="4">
    <location>
        <begin position="124"/>
        <end position="130"/>
    </location>
</feature>
<feature type="helix" evidence="4">
    <location>
        <begin position="135"/>
        <end position="140"/>
    </location>
</feature>
<feature type="helix" evidence="4">
    <location>
        <begin position="148"/>
        <end position="156"/>
    </location>
</feature>
<feature type="strand" evidence="4">
    <location>
        <begin position="161"/>
        <end position="166"/>
    </location>
</feature>
<feature type="strand" evidence="4">
    <location>
        <begin position="169"/>
        <end position="175"/>
    </location>
</feature>
<feature type="helix" evidence="4">
    <location>
        <begin position="180"/>
        <end position="182"/>
    </location>
</feature>
<feature type="helix" evidence="4">
    <location>
        <begin position="183"/>
        <end position="186"/>
    </location>
</feature>
<feature type="helix" evidence="4">
    <location>
        <begin position="189"/>
        <end position="203"/>
    </location>
</feature>
<feature type="strand" evidence="4">
    <location>
        <begin position="206"/>
        <end position="211"/>
    </location>
</feature>
<feature type="helix" evidence="4">
    <location>
        <begin position="215"/>
        <end position="218"/>
    </location>
</feature>
<feature type="turn" evidence="4">
    <location>
        <begin position="219"/>
        <end position="222"/>
    </location>
</feature>
<feature type="helix" evidence="4">
    <location>
        <begin position="226"/>
        <end position="244"/>
    </location>
</feature>
<feature type="helix" evidence="4">
    <location>
        <begin position="248"/>
        <end position="254"/>
    </location>
</feature>
<feature type="helix" evidence="4">
    <location>
        <begin position="258"/>
        <end position="266"/>
    </location>
</feature>
<feature type="helix" evidence="4">
    <location>
        <begin position="281"/>
        <end position="284"/>
    </location>
</feature>
<feature type="helix" evidence="4">
    <location>
        <begin position="287"/>
        <end position="292"/>
    </location>
</feature>
<feature type="strand" evidence="4">
    <location>
        <begin position="295"/>
        <end position="300"/>
    </location>
</feature>
<feature type="helix" evidence="4">
    <location>
        <begin position="301"/>
        <end position="311"/>
    </location>
</feature>
<feature type="turn" evidence="4">
    <location>
        <begin position="313"/>
        <end position="315"/>
    </location>
</feature>
<feature type="strand" evidence="4">
    <location>
        <begin position="317"/>
        <end position="325"/>
    </location>
</feature>
<feature type="strand" evidence="4">
    <location>
        <begin position="327"/>
        <end position="329"/>
    </location>
</feature>
<feature type="helix" evidence="4">
    <location>
        <begin position="348"/>
        <end position="359"/>
    </location>
</feature>